<name>FES1_ASPOR</name>
<accession>Q2U9E2</accession>
<evidence type="ECO:0000250" key="1"/>
<evidence type="ECO:0000256" key="2">
    <source>
        <dbReference type="SAM" id="MobiDB-lite"/>
    </source>
</evidence>
<evidence type="ECO:0000305" key="3"/>
<sequence length="216" mass="23558">MDANMNNLLKWSIQNSTTQQSDAPNASNNTADSSARGLTPEMLSALFGGPSDADLMKAAMEALHSDEVDLENKLIAFDNFEQLIESIDNANNLEPLGLWTPLVELLQHEEAEMRRMAAWCIGTAVQNNEKAQDKLVVFNAVPKLVTMSTTDSNPATRKKAVFALSSAVRNYQPAMDELVKHLPEGYSQGEKVDAGDMDAVDAIMDRLRAHPVPSSA</sequence>
<reference key="1">
    <citation type="journal article" date="2005" name="Nature">
        <title>Genome sequencing and analysis of Aspergillus oryzae.</title>
        <authorList>
            <person name="Machida M."/>
            <person name="Asai K."/>
            <person name="Sano M."/>
            <person name="Tanaka T."/>
            <person name="Kumagai T."/>
            <person name="Terai G."/>
            <person name="Kusumoto K."/>
            <person name="Arima T."/>
            <person name="Akita O."/>
            <person name="Kashiwagi Y."/>
            <person name="Abe K."/>
            <person name="Gomi K."/>
            <person name="Horiuchi H."/>
            <person name="Kitamoto K."/>
            <person name="Kobayashi T."/>
            <person name="Takeuchi M."/>
            <person name="Denning D.W."/>
            <person name="Galagan J.E."/>
            <person name="Nierman W.C."/>
            <person name="Yu J."/>
            <person name="Archer D.B."/>
            <person name="Bennett J.W."/>
            <person name="Bhatnagar D."/>
            <person name="Cleveland T.E."/>
            <person name="Fedorova N.D."/>
            <person name="Gotoh O."/>
            <person name="Horikawa H."/>
            <person name="Hosoyama A."/>
            <person name="Ichinomiya M."/>
            <person name="Igarashi R."/>
            <person name="Iwashita K."/>
            <person name="Juvvadi P.R."/>
            <person name="Kato M."/>
            <person name="Kato Y."/>
            <person name="Kin T."/>
            <person name="Kokubun A."/>
            <person name="Maeda H."/>
            <person name="Maeyama N."/>
            <person name="Maruyama J."/>
            <person name="Nagasaki H."/>
            <person name="Nakajima T."/>
            <person name="Oda K."/>
            <person name="Okada K."/>
            <person name="Paulsen I."/>
            <person name="Sakamoto K."/>
            <person name="Sawano T."/>
            <person name="Takahashi M."/>
            <person name="Takase K."/>
            <person name="Terabayashi Y."/>
            <person name="Wortman J.R."/>
            <person name="Yamada O."/>
            <person name="Yamagata Y."/>
            <person name="Anazawa H."/>
            <person name="Hata Y."/>
            <person name="Koide Y."/>
            <person name="Komori T."/>
            <person name="Koyama Y."/>
            <person name="Minetoki T."/>
            <person name="Suharnan S."/>
            <person name="Tanaka A."/>
            <person name="Isono K."/>
            <person name="Kuhara S."/>
            <person name="Ogasawara N."/>
            <person name="Kikuchi H."/>
        </authorList>
    </citation>
    <scope>NUCLEOTIDE SEQUENCE [LARGE SCALE GENOMIC DNA]</scope>
    <source>
        <strain>ATCC 42149 / RIB 40</strain>
    </source>
</reference>
<protein>
    <recommendedName>
        <fullName>Hsp70 nucleotide exchange factor fes1</fullName>
    </recommendedName>
</protein>
<keyword id="KW-0963">Cytoplasm</keyword>
<keyword id="KW-1185">Reference proteome</keyword>
<keyword id="KW-0677">Repeat</keyword>
<keyword id="KW-0810">Translation regulation</keyword>
<dbReference type="EMBL" id="BA000053">
    <property type="protein sequence ID" value="BAE61823.1"/>
    <property type="molecule type" value="Genomic_DNA"/>
</dbReference>
<dbReference type="RefSeq" id="XP_001822956.1">
    <property type="nucleotide sequence ID" value="XM_001822904.2"/>
</dbReference>
<dbReference type="SMR" id="Q2U9E2"/>
<dbReference type="STRING" id="510516.Q2U9E2"/>
<dbReference type="EnsemblFungi" id="BAE61823">
    <property type="protein sequence ID" value="BAE61823"/>
    <property type="gene ID" value="AO090701000063"/>
</dbReference>
<dbReference type="GeneID" id="5995013"/>
<dbReference type="KEGG" id="aor:AO090701000063"/>
<dbReference type="VEuPathDB" id="FungiDB:AO090701000063"/>
<dbReference type="HOGENOM" id="CLU_084507_0_0_1"/>
<dbReference type="OMA" id="LKWSVEN"/>
<dbReference type="OrthoDB" id="33766at5052"/>
<dbReference type="Proteomes" id="UP000006564">
    <property type="component" value="Chromosome 5"/>
</dbReference>
<dbReference type="GO" id="GO:0005829">
    <property type="term" value="C:cytosol"/>
    <property type="evidence" value="ECO:0007669"/>
    <property type="project" value="EnsemblFungi"/>
</dbReference>
<dbReference type="GO" id="GO:0005783">
    <property type="term" value="C:endoplasmic reticulum"/>
    <property type="evidence" value="ECO:0007669"/>
    <property type="project" value="TreeGrafter"/>
</dbReference>
<dbReference type="GO" id="GO:0000774">
    <property type="term" value="F:adenyl-nucleotide exchange factor activity"/>
    <property type="evidence" value="ECO:0007669"/>
    <property type="project" value="EnsemblFungi"/>
</dbReference>
<dbReference type="GO" id="GO:0071629">
    <property type="term" value="P:cytoplasm protein quality control by the ubiquitin-proteasome system"/>
    <property type="evidence" value="ECO:0007669"/>
    <property type="project" value="EnsemblFungi"/>
</dbReference>
<dbReference type="GO" id="GO:0006417">
    <property type="term" value="P:regulation of translation"/>
    <property type="evidence" value="ECO:0007669"/>
    <property type="project" value="UniProtKB-KW"/>
</dbReference>
<dbReference type="FunFam" id="1.25.10.10:FF:000434">
    <property type="entry name" value="Hsp70 nucleotide exchange factor fes1"/>
    <property type="match status" value="1"/>
</dbReference>
<dbReference type="Gene3D" id="1.25.10.10">
    <property type="entry name" value="Leucine-rich Repeat Variant"/>
    <property type="match status" value="1"/>
</dbReference>
<dbReference type="InterPro" id="IPR011989">
    <property type="entry name" value="ARM-like"/>
</dbReference>
<dbReference type="InterPro" id="IPR016024">
    <property type="entry name" value="ARM-type_fold"/>
</dbReference>
<dbReference type="InterPro" id="IPR050693">
    <property type="entry name" value="Hsp70_NEF-Inhibitors"/>
</dbReference>
<dbReference type="InterPro" id="IPR013918">
    <property type="entry name" value="Nucleotide_exch_fac_Fes1"/>
</dbReference>
<dbReference type="PANTHER" id="PTHR19316:SF18">
    <property type="entry name" value="HSP70-BINDING PROTEIN 1"/>
    <property type="match status" value="1"/>
</dbReference>
<dbReference type="PANTHER" id="PTHR19316">
    <property type="entry name" value="PROTEIN FOLDING REGULATOR"/>
    <property type="match status" value="1"/>
</dbReference>
<dbReference type="Pfam" id="PF08609">
    <property type="entry name" value="Fes1"/>
    <property type="match status" value="1"/>
</dbReference>
<dbReference type="Pfam" id="PF13513">
    <property type="entry name" value="HEAT_EZ"/>
    <property type="match status" value="1"/>
</dbReference>
<dbReference type="SUPFAM" id="SSF48371">
    <property type="entry name" value="ARM repeat"/>
    <property type="match status" value="1"/>
</dbReference>
<gene>
    <name type="primary">fes1</name>
    <name type="ORF">AO090701000063</name>
</gene>
<comment type="function">
    <text evidence="1">Functions as a nucleotide exchange factor (NEF) for Hsp70 chaperones which accelerates the release of ADP. Required for fully efficient Hsp70-mediated folding of proteins (By similarity).</text>
</comment>
<comment type="subcellular location">
    <subcellularLocation>
        <location evidence="1">Cytoplasm</location>
    </subcellularLocation>
</comment>
<comment type="similarity">
    <text evidence="3">Belongs to the FES1 family.</text>
</comment>
<proteinExistence type="inferred from homology"/>
<feature type="chain" id="PRO_0000285386" description="Hsp70 nucleotide exchange factor fes1">
    <location>
        <begin position="1"/>
        <end position="216"/>
    </location>
</feature>
<feature type="repeat" description="ARM 1">
    <location>
        <begin position="27"/>
        <end position="68"/>
    </location>
</feature>
<feature type="repeat" description="ARM 2">
    <location>
        <begin position="87"/>
        <end position="126"/>
    </location>
</feature>
<feature type="repeat" description="ARM 3">
    <location>
        <begin position="129"/>
        <end position="169"/>
    </location>
</feature>
<feature type="region of interest" description="Disordered" evidence="2">
    <location>
        <begin position="16"/>
        <end position="35"/>
    </location>
</feature>
<feature type="compositionally biased region" description="Polar residues" evidence="2">
    <location>
        <begin position="16"/>
        <end position="33"/>
    </location>
</feature>
<organism>
    <name type="scientific">Aspergillus oryzae (strain ATCC 42149 / RIB 40)</name>
    <name type="common">Yellow koji mold</name>
    <dbReference type="NCBI Taxonomy" id="510516"/>
    <lineage>
        <taxon>Eukaryota</taxon>
        <taxon>Fungi</taxon>
        <taxon>Dikarya</taxon>
        <taxon>Ascomycota</taxon>
        <taxon>Pezizomycotina</taxon>
        <taxon>Eurotiomycetes</taxon>
        <taxon>Eurotiomycetidae</taxon>
        <taxon>Eurotiales</taxon>
        <taxon>Aspergillaceae</taxon>
        <taxon>Aspergillus</taxon>
        <taxon>Aspergillus subgen. Circumdati</taxon>
    </lineage>
</organism>